<sequence>MNRPTPNFEAIDKKISAFVTNHDNLLDKLLKQQTELLTSEITTNFEVTQQIQEEVAKKTKQHSKNYKWLVTVVLANGVVSLFLLGGLIYLFSK</sequence>
<protein>
    <recommendedName>
        <fullName>Uncharacterized protein MPN_272</fullName>
    </recommendedName>
</protein>
<organism>
    <name type="scientific">Mycoplasma pneumoniae (strain ATCC 29342 / M129 / Subtype 1)</name>
    <name type="common">Mycoplasmoides pneumoniae</name>
    <dbReference type="NCBI Taxonomy" id="272634"/>
    <lineage>
        <taxon>Bacteria</taxon>
        <taxon>Bacillati</taxon>
        <taxon>Mycoplasmatota</taxon>
        <taxon>Mycoplasmoidales</taxon>
        <taxon>Mycoplasmoidaceae</taxon>
        <taxon>Mycoplasmoides</taxon>
    </lineage>
</organism>
<gene>
    <name type="ordered locus">MPN_272</name>
    <name type="ORF">A65_orf94</name>
    <name type="ORF">MP562.1</name>
</gene>
<keyword id="KW-0472">Membrane</keyword>
<keyword id="KW-1185">Reference proteome</keyword>
<keyword id="KW-0812">Transmembrane</keyword>
<keyword id="KW-1133">Transmembrane helix</keyword>
<feature type="chain" id="PRO_0000210657" description="Uncharacterized protein MPN_272">
    <location>
        <begin position="1"/>
        <end position="93"/>
    </location>
</feature>
<feature type="transmembrane region" description="Helical" evidence="1">
    <location>
        <begin position="68"/>
        <end position="88"/>
    </location>
</feature>
<dbReference type="EMBL" id="U00089">
    <property type="protein sequence ID" value="AAG34755.1"/>
    <property type="molecule type" value="Genomic_DNA"/>
</dbReference>
<dbReference type="RefSeq" id="NP_109960.1">
    <property type="nucleotide sequence ID" value="NC_000912.1"/>
</dbReference>
<dbReference type="RefSeq" id="WP_010874629.1">
    <property type="nucleotide sequence ID" value="NZ_OU342337.1"/>
</dbReference>
<dbReference type="SMR" id="Q9EXD2"/>
<dbReference type="STRING" id="272634.MPN_272"/>
<dbReference type="EnsemblBacteria" id="AAG34755">
    <property type="protein sequence ID" value="AAG34755"/>
    <property type="gene ID" value="MPN_272"/>
</dbReference>
<dbReference type="KEGG" id="mpn:MPN_272"/>
<dbReference type="PATRIC" id="fig|272634.6.peg.292"/>
<dbReference type="HOGENOM" id="CLU_2396490_0_0_14"/>
<dbReference type="BioCyc" id="MPNE272634:G1GJ3-429-MONOMER"/>
<dbReference type="Proteomes" id="UP000000808">
    <property type="component" value="Chromosome"/>
</dbReference>
<dbReference type="GO" id="GO:0016020">
    <property type="term" value="C:membrane"/>
    <property type="evidence" value="ECO:0007669"/>
    <property type="project" value="UniProtKB-SubCell"/>
</dbReference>
<proteinExistence type="predicted"/>
<accession>Q9EXD2</accession>
<comment type="subcellular location">
    <subcellularLocation>
        <location evidence="2">Membrane</location>
        <topology evidence="2">Single-pass membrane protein</topology>
    </subcellularLocation>
</comment>
<name>Y272_MYCPN</name>
<reference key="1">
    <citation type="journal article" date="1996" name="Nucleic Acids Res.">
        <title>Complete sequence analysis of the genome of the bacterium Mycoplasma pneumoniae.</title>
        <authorList>
            <person name="Himmelreich R."/>
            <person name="Hilbert H."/>
            <person name="Plagens H."/>
            <person name="Pirkl E."/>
            <person name="Li B.-C."/>
            <person name="Herrmann R."/>
        </authorList>
    </citation>
    <scope>NUCLEOTIDE SEQUENCE [LARGE SCALE GENOMIC DNA]</scope>
    <source>
        <strain>ATCC 29342 / M129 / Subtype 1</strain>
    </source>
</reference>
<reference key="2">
    <citation type="journal article" date="2000" name="Nucleic Acids Res.">
        <title>Re-annotating the Mycoplasma pneumoniae genome sequence: adding value, function and reading frames.</title>
        <authorList>
            <person name="Dandekar T."/>
            <person name="Huynen M."/>
            <person name="Regula J.T."/>
            <person name="Ueberle B."/>
            <person name="Zimmermann C.U."/>
            <person name="Andrade M.A."/>
            <person name="Doerks T."/>
            <person name="Sanchez-Pulido L."/>
            <person name="Snel B."/>
            <person name="Suyama M."/>
            <person name="Yuan Y.P."/>
            <person name="Herrmann R."/>
            <person name="Bork P."/>
        </authorList>
    </citation>
    <scope>IDENTIFICATION</scope>
    <source>
        <strain>ATCC 29342 / M129 / Subtype 1</strain>
    </source>
</reference>
<evidence type="ECO:0000255" key="1"/>
<evidence type="ECO:0000305" key="2"/>